<proteinExistence type="evidence at protein level"/>
<gene>
    <name evidence="6" type="ORF">GL50803_0017429</name>
</gene>
<feature type="chain" id="PRO_0000459118" description="Gamma-tubulin small complex component GCP2">
    <location>
        <begin position="1"/>
        <end position="961"/>
    </location>
</feature>
<feature type="region of interest" description="Disordered" evidence="2">
    <location>
        <begin position="15"/>
        <end position="76"/>
    </location>
</feature>
<feature type="compositionally biased region" description="Polar residues" evidence="2">
    <location>
        <begin position="43"/>
        <end position="54"/>
    </location>
</feature>
<feature type="compositionally biased region" description="Basic and acidic residues" evidence="2">
    <location>
        <begin position="55"/>
        <end position="65"/>
    </location>
</feature>
<evidence type="ECO:0000255" key="1">
    <source>
        <dbReference type="RuleBase" id="RU363050"/>
    </source>
</evidence>
<evidence type="ECO:0000256" key="2">
    <source>
        <dbReference type="SAM" id="MobiDB-lite"/>
    </source>
</evidence>
<evidence type="ECO:0000269" key="3">
    <source>
    </source>
</evidence>
<evidence type="ECO:0000303" key="4">
    <source>
    </source>
</evidence>
<evidence type="ECO:0000305" key="5"/>
<evidence type="ECO:0000312" key="6">
    <source>
        <dbReference type="EMBL" id="KAE8304190.1"/>
    </source>
</evidence>
<evidence type="ECO:0000312" key="7">
    <source>
        <dbReference type="Proteomes" id="UP000001548"/>
    </source>
</evidence>
<protein>
    <recommendedName>
        <fullName evidence="4">Gamma-tubulin small complex component GCP2</fullName>
        <shortName evidence="4">Gamma-TuSC component GCP2</shortName>
    </recommendedName>
    <alternativeName>
        <fullName evidence="4">Gamma-tubulin complex protein 2</fullName>
        <shortName evidence="4">GCP2</shortName>
    </alternativeName>
    <alternativeName>
        <fullName evidence="4">GlGCP2</fullName>
    </alternativeName>
</protein>
<name>GCP2_GIAIC</name>
<sequence length="961" mass="107504">MSSVFADPRVKELLNLHRSPKLATEGKTPPSQVQDLVNKYSRLGSNVVSHPTRSSPEKTTDKPADSKPSIPPLKSESVMTRLTALSSNNTTQNVASLVTAIASHPATAALPKQEASQQPVIPTSVEKRAVTQPLSQQNMNKLMNAIDPQAAPLIEDQVAGKHTGTKPLLTLQQQQAISSLPTKSERESALNEIALNTAIQSAQHANMELSKAGITFPMWFFGVQNQSDLVSRSFISLAHIQQPMVMNDSLLQEHLLVSDCIAVLQGCMQTTYLQVSEQNKEYVVTIRKEVATELPATLVAMTQRVLVHAHARFQIVNTIYTHQVPEYGRIANAFSQALRCIIKEYDFYLADLSKKHYGKMQSSAERGSLSLQTLEVKTKQIHIILENVADLCSRLGVVRGCALLQQLETAVLQSSGLSVKEVFQYLLSESLKPLGRIMDRYINEAVIPDSDAADFFIRKSHSTELAEEQGKTTINTWMQMFKVDDAQVPLFLNNIKTHLCDIGRSTVLLKWKKKQYIDKGPNASGQELLLLSAEASGETTQGFRHGEETVASLVCGDGSTGDLELAHIRLYKQLIDINARVQTKVLDFFINPEYLDFRGHLQNIYAFYLVMAGDFLSCFVESAISELVLSRSVANILRIRSKFKMVIKTSSLANLPYNERMNVIVCPELFKHHLNSVLYPQTYVPDRATDSPDPKVLNLLGLQYDVTYPLNLVLTTPVMERLNLVFRHILRAKVSEIELQKAWTTLQRLRKLERVPHDKIEVYANALRSDKSPIIIFFGVAYKMLITMLDFIHSLQFQYVTILTECIAKFQDTLVNAKSLDDLVSGMSAFANGLIMSLGLVSNNVVNILDTLFNDCIVYSHHIVKTFCIISNEDDEFIRKIVTINEESREGKSGPRGVKGSERMTSLLKKREAIEMTRLIAIANSVYSLIVDNRGLIATLMTKFNKGVASYEQVIRNFDDR</sequence>
<organism evidence="6 7">
    <name type="scientific">Giardia intestinalis (strain ATCC 50803 / WB clone C6)</name>
    <name type="common">Giardia lamblia</name>
    <dbReference type="NCBI Taxonomy" id="184922"/>
    <lineage>
        <taxon>Eukaryota</taxon>
        <taxon>Metamonada</taxon>
        <taxon>Diplomonadida</taxon>
        <taxon>Hexamitidae</taxon>
        <taxon>Giardiinae</taxon>
        <taxon>Giardia</taxon>
    </lineage>
</organism>
<accession>A0A644F7M7</accession>
<accession>A8BD62</accession>
<reference evidence="6 7" key="1">
    <citation type="journal article" date="2007" name="Science">
        <title>Genomic minimalism in the early diverging intestinal parasite Giardia lamblia.</title>
        <authorList>
            <person name="Morrison H.G."/>
            <person name="McArthur A.G."/>
            <person name="Gillin F.D."/>
            <person name="Aley S.B."/>
            <person name="Adam R.D."/>
            <person name="Olsen G.J."/>
            <person name="Best A.A."/>
            <person name="Cande W.Z."/>
            <person name="Chen F."/>
            <person name="Cipriano M.J."/>
            <person name="Davids B.J."/>
            <person name="Dawson S.C."/>
            <person name="Elmendorf H.G."/>
            <person name="Hehl A.B."/>
            <person name="Holder M.E."/>
            <person name="Huse S.M."/>
            <person name="Kim U.U."/>
            <person name="Lasek-Nesselquist E."/>
            <person name="Manning G."/>
            <person name="Nigam A."/>
            <person name="Nixon J.E.J."/>
            <person name="Palm D."/>
            <person name="Passamaneck N.E."/>
            <person name="Prabhu A."/>
            <person name="Reich C.I."/>
            <person name="Reiner D.S."/>
            <person name="Samuelson J."/>
            <person name="Svard S.G."/>
            <person name="Sogin M.L."/>
        </authorList>
    </citation>
    <scope>NUCLEOTIDE SEQUENCE [LARGE SCALE GENOMIC DNA]</scope>
    <source>
        <strain evidence="7">ATCC 50803 / WB clone C6</strain>
    </source>
</reference>
<reference key="2">
    <citation type="journal article" date="2019" name="MicrobiologyOpen">
        <title>Roles of end-binding 1 protein and gamma-tubulin small complex in cytokinesis and flagella formation of Giardia lamblia.</title>
        <authorList>
            <person name="Kim J."/>
            <person name="Park S.J."/>
        </authorList>
    </citation>
    <scope>PEPTIDE SYNTHESIS OF 885-903</scope>
    <scope>FUNCTION</scope>
    <scope>SUBUNIT</scope>
    <scope>INTERACTION WITH TUBULIN GAMMA CHAIN</scope>
    <scope>SUBCELLULAR LOCATION</scope>
    <scope>DISRUPTION PHENOTYPE</scope>
    <source>
        <strain evidence="4">ATCC 30957 / WB</strain>
    </source>
</reference>
<dbReference type="EMBL" id="AACB02000012">
    <property type="protein sequence ID" value="EDO80053.1"/>
    <property type="status" value="ALT_INIT"/>
    <property type="molecule type" value="Genomic_DNA"/>
</dbReference>
<dbReference type="EMBL" id="AACB03000002">
    <property type="protein sequence ID" value="KAE8304190.1"/>
    <property type="molecule type" value="Genomic_DNA"/>
</dbReference>
<dbReference type="RefSeq" id="XP_001707727.1">
    <property type="nucleotide sequence ID" value="XM_001707675.1"/>
</dbReference>
<dbReference type="SMR" id="A0A644F7M7"/>
<dbReference type="FunCoup" id="A0A644F7M7">
    <property type="interactions" value="205"/>
</dbReference>
<dbReference type="STRING" id="184922.A0A644F7M7"/>
<dbReference type="EnsemblProtists" id="EDO80053">
    <property type="protein sequence ID" value="EDO80053"/>
    <property type="gene ID" value="GL50803_17429"/>
</dbReference>
<dbReference type="GeneID" id="5700632"/>
<dbReference type="KEGG" id="gla:GL50803_0017429"/>
<dbReference type="VEuPathDB" id="GiardiaDB:GL50803_17429"/>
<dbReference type="HOGENOM" id="CLU_302774_0_0_1"/>
<dbReference type="InParanoid" id="A0A644F7M7"/>
<dbReference type="Proteomes" id="UP000001548">
    <property type="component" value="Chromosome 4"/>
</dbReference>
<dbReference type="GO" id="GO:0097729">
    <property type="term" value="C:9+2 motile cilium"/>
    <property type="evidence" value="ECO:0000314"/>
    <property type="project" value="UniProtKB"/>
</dbReference>
<dbReference type="GO" id="GO:0005930">
    <property type="term" value="C:axoneme"/>
    <property type="evidence" value="ECO:0000314"/>
    <property type="project" value="UniProtKB"/>
</dbReference>
<dbReference type="GO" id="GO:0036064">
    <property type="term" value="C:ciliary basal body"/>
    <property type="evidence" value="ECO:0000314"/>
    <property type="project" value="UniProtKB"/>
</dbReference>
<dbReference type="GO" id="GO:0000930">
    <property type="term" value="C:gamma-tubulin complex"/>
    <property type="evidence" value="ECO:0000318"/>
    <property type="project" value="GO_Central"/>
</dbReference>
<dbReference type="GO" id="GO:0008275">
    <property type="term" value="C:gamma-tubulin small complex"/>
    <property type="evidence" value="ECO:0000314"/>
    <property type="project" value="UniProtKB"/>
</dbReference>
<dbReference type="GO" id="GO:0097568">
    <property type="term" value="C:median body"/>
    <property type="evidence" value="ECO:0000314"/>
    <property type="project" value="UniProtKB"/>
</dbReference>
<dbReference type="GO" id="GO:0005874">
    <property type="term" value="C:microtubule"/>
    <property type="evidence" value="ECO:0007669"/>
    <property type="project" value="UniProtKB-KW"/>
</dbReference>
<dbReference type="GO" id="GO:0000922">
    <property type="term" value="C:spindle pole"/>
    <property type="evidence" value="ECO:0007669"/>
    <property type="project" value="InterPro"/>
</dbReference>
<dbReference type="GO" id="GO:0043015">
    <property type="term" value="F:gamma-tubulin binding"/>
    <property type="evidence" value="ECO:0000314"/>
    <property type="project" value="UniProtKB"/>
</dbReference>
<dbReference type="GO" id="GO:0031122">
    <property type="term" value="P:cytoplasmic microtubule organization"/>
    <property type="evidence" value="ECO:0000315"/>
    <property type="project" value="UniProtKB"/>
</dbReference>
<dbReference type="GO" id="GO:0051321">
    <property type="term" value="P:meiotic cell cycle"/>
    <property type="evidence" value="ECO:0000318"/>
    <property type="project" value="GO_Central"/>
</dbReference>
<dbReference type="GO" id="GO:0007020">
    <property type="term" value="P:microtubule nucleation"/>
    <property type="evidence" value="ECO:0000315"/>
    <property type="project" value="UniProtKB"/>
</dbReference>
<dbReference type="GO" id="GO:0000278">
    <property type="term" value="P:mitotic cell cycle"/>
    <property type="evidence" value="ECO:0000314"/>
    <property type="project" value="UniProtKB"/>
</dbReference>
<dbReference type="GO" id="GO:1903673">
    <property type="term" value="P:mitotic cleavage furrow formation"/>
    <property type="evidence" value="ECO:0000315"/>
    <property type="project" value="UniProtKB"/>
</dbReference>
<dbReference type="GO" id="GO:1902410">
    <property type="term" value="P:mitotic cytokinetic process"/>
    <property type="evidence" value="ECO:0000315"/>
    <property type="project" value="UniProtKB"/>
</dbReference>
<dbReference type="GO" id="GO:0044458">
    <property type="term" value="P:motile cilium assembly"/>
    <property type="evidence" value="ECO:0000315"/>
    <property type="project" value="UniProtKB"/>
</dbReference>
<dbReference type="GO" id="GO:0051225">
    <property type="term" value="P:spindle assembly"/>
    <property type="evidence" value="ECO:0000318"/>
    <property type="project" value="GO_Central"/>
</dbReference>
<dbReference type="Gene3D" id="1.20.120.1900">
    <property type="entry name" value="Gamma-tubulin complex, C-terminal domain"/>
    <property type="match status" value="1"/>
</dbReference>
<dbReference type="InterPro" id="IPR007259">
    <property type="entry name" value="GCP"/>
</dbReference>
<dbReference type="InterPro" id="IPR040457">
    <property type="entry name" value="GCP_C"/>
</dbReference>
<dbReference type="InterPro" id="IPR042241">
    <property type="entry name" value="GCP_C_sf"/>
</dbReference>
<dbReference type="InterPro" id="IPR041470">
    <property type="entry name" value="GCP_N"/>
</dbReference>
<dbReference type="PANTHER" id="PTHR19302">
    <property type="entry name" value="GAMMA TUBULIN COMPLEX PROTEIN"/>
    <property type="match status" value="1"/>
</dbReference>
<dbReference type="PANTHER" id="PTHR19302:SF13">
    <property type="entry name" value="GAMMA-TUBULIN COMPLEX COMPONENT 2"/>
    <property type="match status" value="1"/>
</dbReference>
<dbReference type="Pfam" id="PF04130">
    <property type="entry name" value="GCP_C_terminal"/>
    <property type="match status" value="1"/>
</dbReference>
<dbReference type="Pfam" id="PF17681">
    <property type="entry name" value="GCP_N_terminal"/>
    <property type="match status" value="1"/>
</dbReference>
<comment type="function">
    <text evidence="3">Component of the gamma-tubulin small complex (gamma-TuSC) involved in microtubule (MT) nucleation for the formation of median bodies and in the biogenesis of flagella. Gamma-TuSC may be required for the correct positioning of EB1 within the trophozoites.</text>
</comment>
<comment type="subunit">
    <text evidence="3">Component of the gamma-tubulin small complex (gamma-TuSC) composed of tubulin gamma chain, gamma-tubulin complex protein 2 (GCP2) and gamma-tubulin complex protein 3 (GCP3). Interacts with tubulin gamma chain.</text>
</comment>
<comment type="subcellular location">
    <subcellularLocation>
        <location evidence="3">Cytoplasm</location>
        <location evidence="3">Cytoskeleton</location>
        <location evidence="3">Flagellum axoneme</location>
    </subcellularLocation>
    <subcellularLocation>
        <location evidence="3">Cytoplasm</location>
        <location evidence="3">Cytoskeleton</location>
        <location evidence="3">Flagellum basal body</location>
    </subcellularLocation>
    <subcellularLocation>
        <location evidence="3">Cytoplasm</location>
        <location evidence="3">Cytoskeleton</location>
    </subcellularLocation>
    <text evidence="3">Localizes to basal bodies, axonemes and median bodies of the trophozoites during interface. Colocalizes with tubulin gamma chain.</text>
</comment>
<comment type="disruption phenotype">
    <text evidence="3">Knockdown of expression by morpholino results in increased number of cells arrested in cytokinesis, reduced volume of median bodies, increase of cells without furrows, and reduced length of the caudal flagella.</text>
</comment>
<comment type="similarity">
    <text evidence="1">Belongs to the TUBGCP family.</text>
</comment>
<comment type="sequence caution" evidence="5">
    <conflict type="erroneous initiation">
        <sequence resource="EMBL-CDS" id="EDO80053"/>
    </conflict>
    <text>Extended N-terminus.</text>
</comment>
<keyword id="KW-0966">Cell projection</keyword>
<keyword id="KW-0969">Cilium</keyword>
<keyword id="KW-0963">Cytoplasm</keyword>
<keyword id="KW-0206">Cytoskeleton</keyword>
<keyword id="KW-0282">Flagellum</keyword>
<keyword id="KW-0493">Microtubule</keyword>
<keyword id="KW-1185">Reference proteome</keyword>